<dbReference type="EC" id="5.3.1.16" evidence="1"/>
<dbReference type="EMBL" id="CU928162">
    <property type="protein sequence ID" value="CAR08558.2"/>
    <property type="molecule type" value="Genomic_DNA"/>
</dbReference>
<dbReference type="RefSeq" id="WP_000586455.1">
    <property type="nucleotide sequence ID" value="NC_011745.1"/>
</dbReference>
<dbReference type="SMR" id="B7MWU2"/>
<dbReference type="KEGG" id="ecq:ECED1_2373"/>
<dbReference type="HOGENOM" id="CLU_048577_1_2_6"/>
<dbReference type="UniPathway" id="UPA00031">
    <property type="reaction ID" value="UER00009"/>
</dbReference>
<dbReference type="Proteomes" id="UP000000748">
    <property type="component" value="Chromosome"/>
</dbReference>
<dbReference type="GO" id="GO:0005737">
    <property type="term" value="C:cytoplasm"/>
    <property type="evidence" value="ECO:0007669"/>
    <property type="project" value="UniProtKB-SubCell"/>
</dbReference>
<dbReference type="GO" id="GO:0003949">
    <property type="term" value="F:1-(5-phosphoribosyl)-5-[(5-phosphoribosylamino)methylideneamino]imidazole-4-carboxamide isomerase activity"/>
    <property type="evidence" value="ECO:0007669"/>
    <property type="project" value="UniProtKB-UniRule"/>
</dbReference>
<dbReference type="GO" id="GO:0000105">
    <property type="term" value="P:L-histidine biosynthetic process"/>
    <property type="evidence" value="ECO:0007669"/>
    <property type="project" value="UniProtKB-UniRule"/>
</dbReference>
<dbReference type="GO" id="GO:0000162">
    <property type="term" value="P:L-tryptophan biosynthetic process"/>
    <property type="evidence" value="ECO:0007669"/>
    <property type="project" value="TreeGrafter"/>
</dbReference>
<dbReference type="CDD" id="cd04732">
    <property type="entry name" value="HisA"/>
    <property type="match status" value="1"/>
</dbReference>
<dbReference type="FunFam" id="3.20.20.70:FF:000009">
    <property type="entry name" value="1-(5-phosphoribosyl)-5-[(5-phosphoribosylamino)methylideneamino] imidazole-4-carboxamide isomerase"/>
    <property type="match status" value="1"/>
</dbReference>
<dbReference type="Gene3D" id="3.20.20.70">
    <property type="entry name" value="Aldolase class I"/>
    <property type="match status" value="1"/>
</dbReference>
<dbReference type="HAMAP" id="MF_01014">
    <property type="entry name" value="HisA"/>
    <property type="match status" value="1"/>
</dbReference>
<dbReference type="InterPro" id="IPR013785">
    <property type="entry name" value="Aldolase_TIM"/>
</dbReference>
<dbReference type="InterPro" id="IPR006062">
    <property type="entry name" value="His_biosynth"/>
</dbReference>
<dbReference type="InterPro" id="IPR006063">
    <property type="entry name" value="HisA_bact_arch"/>
</dbReference>
<dbReference type="InterPro" id="IPR044524">
    <property type="entry name" value="Isoase_HisA-like"/>
</dbReference>
<dbReference type="InterPro" id="IPR023016">
    <property type="entry name" value="Isoase_HisA-like_bact"/>
</dbReference>
<dbReference type="InterPro" id="IPR011060">
    <property type="entry name" value="RibuloseP-bd_barrel"/>
</dbReference>
<dbReference type="NCBIfam" id="TIGR00007">
    <property type="entry name" value="1-(5-phosphoribosyl)-5-[(5-phosphoribosylamino)methylideneamino]imidazole-4-carboxamide isomerase"/>
    <property type="match status" value="1"/>
</dbReference>
<dbReference type="PANTHER" id="PTHR43090">
    <property type="entry name" value="1-(5-PHOSPHORIBOSYL)-5-[(5-PHOSPHORIBOSYLAMINO)METHYLIDENEAMINO] IMIDAZOLE-4-CARBOXAMIDE ISOMERASE"/>
    <property type="match status" value="1"/>
</dbReference>
<dbReference type="PANTHER" id="PTHR43090:SF2">
    <property type="entry name" value="1-(5-PHOSPHORIBOSYL)-5-[(5-PHOSPHORIBOSYLAMINO)METHYLIDENEAMINO] IMIDAZOLE-4-CARBOXAMIDE ISOMERASE"/>
    <property type="match status" value="1"/>
</dbReference>
<dbReference type="Pfam" id="PF00977">
    <property type="entry name" value="His_biosynth"/>
    <property type="match status" value="1"/>
</dbReference>
<dbReference type="SUPFAM" id="SSF51366">
    <property type="entry name" value="Ribulose-phoshate binding barrel"/>
    <property type="match status" value="1"/>
</dbReference>
<sequence>MIIPALDLIDGTVVRLHQGDYGKQRDYGNDPLPRLQDYAAQGAEVLHLVDLTGAKDPAKRQIPLIKTLVAGVNVPVQVGGGVRSEEDVAALLEAGVARVVVGSTAVKSPEMVKGWFERFGTDALVLALDVRIDEQGNKQVAVSGWQENSGVSLEQLVETYLPVGLKHVLCTDISRDGTLAGSNVSLYEEVCARYPQVAFQSSGGIGDIDDVAALRGTGVRGVIVGRALLEGKFTVKEAIACWQNA</sequence>
<name>HIS4_ECO81</name>
<reference key="1">
    <citation type="journal article" date="2009" name="PLoS Genet.">
        <title>Organised genome dynamics in the Escherichia coli species results in highly diverse adaptive paths.</title>
        <authorList>
            <person name="Touchon M."/>
            <person name="Hoede C."/>
            <person name="Tenaillon O."/>
            <person name="Barbe V."/>
            <person name="Baeriswyl S."/>
            <person name="Bidet P."/>
            <person name="Bingen E."/>
            <person name="Bonacorsi S."/>
            <person name="Bouchier C."/>
            <person name="Bouvet O."/>
            <person name="Calteau A."/>
            <person name="Chiapello H."/>
            <person name="Clermont O."/>
            <person name="Cruveiller S."/>
            <person name="Danchin A."/>
            <person name="Diard M."/>
            <person name="Dossat C."/>
            <person name="Karoui M.E."/>
            <person name="Frapy E."/>
            <person name="Garry L."/>
            <person name="Ghigo J.M."/>
            <person name="Gilles A.M."/>
            <person name="Johnson J."/>
            <person name="Le Bouguenec C."/>
            <person name="Lescat M."/>
            <person name="Mangenot S."/>
            <person name="Martinez-Jehanne V."/>
            <person name="Matic I."/>
            <person name="Nassif X."/>
            <person name="Oztas S."/>
            <person name="Petit M.A."/>
            <person name="Pichon C."/>
            <person name="Rouy Z."/>
            <person name="Ruf C.S."/>
            <person name="Schneider D."/>
            <person name="Tourret J."/>
            <person name="Vacherie B."/>
            <person name="Vallenet D."/>
            <person name="Medigue C."/>
            <person name="Rocha E.P.C."/>
            <person name="Denamur E."/>
        </authorList>
    </citation>
    <scope>NUCLEOTIDE SEQUENCE [LARGE SCALE GENOMIC DNA]</scope>
    <source>
        <strain>ED1a</strain>
    </source>
</reference>
<gene>
    <name evidence="1" type="primary">hisA</name>
    <name type="ordered locus">ECED1_2373</name>
</gene>
<protein>
    <recommendedName>
        <fullName evidence="1">1-(5-phosphoribosyl)-5-[(5-phosphoribosylamino)methylideneamino] imidazole-4-carboxamide isomerase</fullName>
        <ecNumber evidence="1">5.3.1.16</ecNumber>
    </recommendedName>
    <alternativeName>
        <fullName evidence="1">Phosphoribosylformimino-5-aminoimidazole carboxamide ribotide isomerase</fullName>
    </alternativeName>
</protein>
<proteinExistence type="inferred from homology"/>
<feature type="chain" id="PRO_1000148972" description="1-(5-phosphoribosyl)-5-[(5-phosphoribosylamino)methylideneamino] imidazole-4-carboxamide isomerase">
    <location>
        <begin position="1"/>
        <end position="245"/>
    </location>
</feature>
<feature type="active site" description="Proton acceptor" evidence="1">
    <location>
        <position position="7"/>
    </location>
</feature>
<feature type="active site" description="Proton donor" evidence="1">
    <location>
        <position position="129"/>
    </location>
</feature>
<accession>B7MWU2</accession>
<keyword id="KW-0028">Amino-acid biosynthesis</keyword>
<keyword id="KW-0963">Cytoplasm</keyword>
<keyword id="KW-0368">Histidine biosynthesis</keyword>
<keyword id="KW-0413">Isomerase</keyword>
<comment type="catalytic activity">
    <reaction evidence="1">
        <text>1-(5-phospho-beta-D-ribosyl)-5-[(5-phospho-beta-D-ribosylamino)methylideneamino]imidazole-4-carboxamide = 5-[(5-phospho-1-deoxy-D-ribulos-1-ylimino)methylamino]-1-(5-phospho-beta-D-ribosyl)imidazole-4-carboxamide</text>
        <dbReference type="Rhea" id="RHEA:15469"/>
        <dbReference type="ChEBI" id="CHEBI:58435"/>
        <dbReference type="ChEBI" id="CHEBI:58525"/>
        <dbReference type="EC" id="5.3.1.16"/>
    </reaction>
</comment>
<comment type="pathway">
    <text evidence="1">Amino-acid biosynthesis; L-histidine biosynthesis; L-histidine from 5-phospho-alpha-D-ribose 1-diphosphate: step 4/9.</text>
</comment>
<comment type="subcellular location">
    <subcellularLocation>
        <location evidence="1">Cytoplasm</location>
    </subcellularLocation>
</comment>
<comment type="similarity">
    <text evidence="1">Belongs to the HisA/HisF family.</text>
</comment>
<organism>
    <name type="scientific">Escherichia coli O81 (strain ED1a)</name>
    <dbReference type="NCBI Taxonomy" id="585397"/>
    <lineage>
        <taxon>Bacteria</taxon>
        <taxon>Pseudomonadati</taxon>
        <taxon>Pseudomonadota</taxon>
        <taxon>Gammaproteobacteria</taxon>
        <taxon>Enterobacterales</taxon>
        <taxon>Enterobacteriaceae</taxon>
        <taxon>Escherichia</taxon>
    </lineage>
</organism>
<evidence type="ECO:0000255" key="1">
    <source>
        <dbReference type="HAMAP-Rule" id="MF_01014"/>
    </source>
</evidence>